<feature type="chain" id="PRO_0000218222" description="Putative glutamate--cysteine ligase 2">
    <location>
        <begin position="1"/>
        <end position="363"/>
    </location>
</feature>
<evidence type="ECO:0000255" key="1">
    <source>
        <dbReference type="HAMAP-Rule" id="MF_01609"/>
    </source>
</evidence>
<reference key="1">
    <citation type="journal article" date="2002" name="Nature">
        <title>Complete genome sequence of the model actinomycete Streptomyces coelicolor A3(2).</title>
        <authorList>
            <person name="Bentley S.D."/>
            <person name="Chater K.F."/>
            <person name="Cerdeno-Tarraga A.-M."/>
            <person name="Challis G.L."/>
            <person name="Thomson N.R."/>
            <person name="James K.D."/>
            <person name="Harris D.E."/>
            <person name="Quail M.A."/>
            <person name="Kieser H."/>
            <person name="Harper D."/>
            <person name="Bateman A."/>
            <person name="Brown S."/>
            <person name="Chandra G."/>
            <person name="Chen C.W."/>
            <person name="Collins M."/>
            <person name="Cronin A."/>
            <person name="Fraser A."/>
            <person name="Goble A."/>
            <person name="Hidalgo J."/>
            <person name="Hornsby T."/>
            <person name="Howarth S."/>
            <person name="Huang C.-H."/>
            <person name="Kieser T."/>
            <person name="Larke L."/>
            <person name="Murphy L.D."/>
            <person name="Oliver K."/>
            <person name="O'Neil S."/>
            <person name="Rabbinowitsch E."/>
            <person name="Rajandream M.A."/>
            <person name="Rutherford K.M."/>
            <person name="Rutter S."/>
            <person name="Seeger K."/>
            <person name="Saunders D."/>
            <person name="Sharp S."/>
            <person name="Squares R."/>
            <person name="Squares S."/>
            <person name="Taylor K."/>
            <person name="Warren T."/>
            <person name="Wietzorrek A."/>
            <person name="Woodward J.R."/>
            <person name="Barrell B.G."/>
            <person name="Parkhill J."/>
            <person name="Hopwood D.A."/>
        </authorList>
    </citation>
    <scope>NUCLEOTIDE SEQUENCE [LARGE SCALE GENOMIC DNA]</scope>
    <source>
        <strain>ATCC BAA-471 / A3(2) / M145</strain>
    </source>
</reference>
<accession>Q9KY07</accession>
<name>GCS2_STRCO</name>
<gene>
    <name type="ordered locus">SCO7331</name>
    <name type="ORF">SC410.10c</name>
    <name type="ORF">SC4G10.10c</name>
</gene>
<proteinExistence type="inferred from homology"/>
<comment type="function">
    <text evidence="1">ATP-dependent carboxylate-amine ligase which exhibits weak glutamate--cysteine ligase activity.</text>
</comment>
<comment type="catalytic activity">
    <reaction evidence="1">
        <text>L-cysteine + L-glutamate + ATP = gamma-L-glutamyl-L-cysteine + ADP + phosphate + H(+)</text>
        <dbReference type="Rhea" id="RHEA:13285"/>
        <dbReference type="ChEBI" id="CHEBI:15378"/>
        <dbReference type="ChEBI" id="CHEBI:29985"/>
        <dbReference type="ChEBI" id="CHEBI:30616"/>
        <dbReference type="ChEBI" id="CHEBI:35235"/>
        <dbReference type="ChEBI" id="CHEBI:43474"/>
        <dbReference type="ChEBI" id="CHEBI:58173"/>
        <dbReference type="ChEBI" id="CHEBI:456216"/>
        <dbReference type="EC" id="6.3.2.2"/>
    </reaction>
</comment>
<comment type="similarity">
    <text evidence="1">Belongs to the glutamate--cysteine ligase type 2 family. YbdK subfamily.</text>
</comment>
<dbReference type="EC" id="6.3.2.2" evidence="1"/>
<dbReference type="EMBL" id="AL939131">
    <property type="protein sequence ID" value="CAB92877.1"/>
    <property type="molecule type" value="Genomic_DNA"/>
</dbReference>
<dbReference type="RefSeq" id="NP_631385.1">
    <property type="nucleotide sequence ID" value="NC_003888.3"/>
</dbReference>
<dbReference type="RefSeq" id="WP_011031591.1">
    <property type="nucleotide sequence ID" value="NZ_VNID01000019.1"/>
</dbReference>
<dbReference type="SMR" id="Q9KY07"/>
<dbReference type="FunCoup" id="Q9KY07">
    <property type="interactions" value="13"/>
</dbReference>
<dbReference type="STRING" id="100226.gene:17764991"/>
<dbReference type="PaxDb" id="100226-SCO7331"/>
<dbReference type="KEGG" id="sco:SCO7331"/>
<dbReference type="PATRIC" id="fig|100226.15.peg.7435"/>
<dbReference type="eggNOG" id="COG2170">
    <property type="taxonomic scope" value="Bacteria"/>
</dbReference>
<dbReference type="HOGENOM" id="CLU_044848_0_0_11"/>
<dbReference type="InParanoid" id="Q9KY07"/>
<dbReference type="OrthoDB" id="9803842at2"/>
<dbReference type="PhylomeDB" id="Q9KY07"/>
<dbReference type="Proteomes" id="UP000001973">
    <property type="component" value="Chromosome"/>
</dbReference>
<dbReference type="GO" id="GO:0005524">
    <property type="term" value="F:ATP binding"/>
    <property type="evidence" value="ECO:0007669"/>
    <property type="project" value="UniProtKB-KW"/>
</dbReference>
<dbReference type="GO" id="GO:0004357">
    <property type="term" value="F:glutamate-cysteine ligase activity"/>
    <property type="evidence" value="ECO:0007669"/>
    <property type="project" value="UniProtKB-EC"/>
</dbReference>
<dbReference type="GO" id="GO:0016879">
    <property type="term" value="F:ligase activity, forming carbon-nitrogen bonds"/>
    <property type="evidence" value="ECO:0000318"/>
    <property type="project" value="GO_Central"/>
</dbReference>
<dbReference type="GO" id="GO:0042398">
    <property type="term" value="P:modified amino acid biosynthetic process"/>
    <property type="evidence" value="ECO:0007669"/>
    <property type="project" value="InterPro"/>
</dbReference>
<dbReference type="FunFam" id="3.30.590.20:FF:000014">
    <property type="entry name" value="Putative glutamate--cysteine ligase 2"/>
    <property type="match status" value="1"/>
</dbReference>
<dbReference type="Gene3D" id="3.30.590.20">
    <property type="match status" value="1"/>
</dbReference>
<dbReference type="HAMAP" id="MF_01609">
    <property type="entry name" value="Glu_cys_ligase_2"/>
    <property type="match status" value="1"/>
</dbReference>
<dbReference type="InterPro" id="IPR050141">
    <property type="entry name" value="GCL_type2/YbdK_subfam"/>
</dbReference>
<dbReference type="InterPro" id="IPR006336">
    <property type="entry name" value="GCS2"/>
</dbReference>
<dbReference type="InterPro" id="IPR014746">
    <property type="entry name" value="Gln_synth/guanido_kin_cat_dom"/>
</dbReference>
<dbReference type="InterPro" id="IPR011793">
    <property type="entry name" value="YbdK"/>
</dbReference>
<dbReference type="NCBIfam" id="TIGR02050">
    <property type="entry name" value="gshA_cyan_rel"/>
    <property type="match status" value="1"/>
</dbReference>
<dbReference type="NCBIfam" id="NF010041">
    <property type="entry name" value="PRK13517.1-1"/>
    <property type="match status" value="1"/>
</dbReference>
<dbReference type="PANTHER" id="PTHR36510">
    <property type="entry name" value="GLUTAMATE--CYSTEINE LIGASE 2-RELATED"/>
    <property type="match status" value="1"/>
</dbReference>
<dbReference type="PANTHER" id="PTHR36510:SF1">
    <property type="entry name" value="GLUTAMATE--CYSTEINE LIGASE 2-RELATED"/>
    <property type="match status" value="1"/>
</dbReference>
<dbReference type="Pfam" id="PF04107">
    <property type="entry name" value="GCS2"/>
    <property type="match status" value="1"/>
</dbReference>
<dbReference type="SUPFAM" id="SSF55931">
    <property type="entry name" value="Glutamine synthetase/guanido kinase"/>
    <property type="match status" value="1"/>
</dbReference>
<keyword id="KW-0067">ATP-binding</keyword>
<keyword id="KW-0436">Ligase</keyword>
<keyword id="KW-0547">Nucleotide-binding</keyword>
<keyword id="KW-1185">Reference proteome</keyword>
<organism>
    <name type="scientific">Streptomyces coelicolor (strain ATCC BAA-471 / A3(2) / M145)</name>
    <dbReference type="NCBI Taxonomy" id="100226"/>
    <lineage>
        <taxon>Bacteria</taxon>
        <taxon>Bacillati</taxon>
        <taxon>Actinomycetota</taxon>
        <taxon>Actinomycetes</taxon>
        <taxon>Kitasatosporales</taxon>
        <taxon>Streptomycetaceae</taxon>
        <taxon>Streptomyces</taxon>
        <taxon>Streptomyces albidoflavus group</taxon>
    </lineage>
</organism>
<sequence length="363" mass="39895">MRTVGVEEELLLVDPATGEPRALSAAVLARAFLDDSEQDVFEKELHEQMLEFATHPQADMERLHAEIVRCREEAGRHAGGIGCAVAALATSPLPVTPSIGVNRRYEWMAEQYGVVVHEQLVLGCHVHVSVDSDEEGVAVIDRVRPWLPVLAALSANSPFWQGRDSSYSSYRSRVWQRWPSAGPTELFGSAERYHRRVADMLATGTVLDDGMVYFDVRLSQRYPTVEFRVADVCLDASTAVVLAALARALVDTAAREWRAGAEPAEHSVSLLRLAAWRAARSGLTSELLHPATMRRMPAESVVRDLLEHAGEALAAAGDLERVREGVEKLLRHGNGARVQRELLARTGSLREVVAACVRRTQAA</sequence>
<protein>
    <recommendedName>
        <fullName evidence="1">Putative glutamate--cysteine ligase 2</fullName>
        <ecNumber evidence="1">6.3.2.2</ecNumber>
    </recommendedName>
    <alternativeName>
        <fullName evidence="1">Gamma-glutamylcysteine synthetase 2</fullName>
        <shortName evidence="1">GCS 2</shortName>
        <shortName evidence="1">Gamma-GCS 2</shortName>
    </alternativeName>
</protein>